<comment type="catalytic activity">
    <reaction evidence="1">
        <text>2-(N(omega)-L-arginino)succinate = fumarate + L-arginine</text>
        <dbReference type="Rhea" id="RHEA:24020"/>
        <dbReference type="ChEBI" id="CHEBI:29806"/>
        <dbReference type="ChEBI" id="CHEBI:32682"/>
        <dbReference type="ChEBI" id="CHEBI:57472"/>
        <dbReference type="EC" id="4.3.2.1"/>
    </reaction>
</comment>
<comment type="pathway">
    <text evidence="1">Amino-acid biosynthesis; L-arginine biosynthesis; L-arginine from L-ornithine and carbamoyl phosphate: step 3/3.</text>
</comment>
<comment type="subcellular location">
    <subcellularLocation>
        <location evidence="1">Cytoplasm</location>
    </subcellularLocation>
</comment>
<comment type="similarity">
    <text evidence="1">Belongs to the lyase 1 family. Argininosuccinate lyase subfamily.</text>
</comment>
<keyword id="KW-0028">Amino-acid biosynthesis</keyword>
<keyword id="KW-0055">Arginine biosynthesis</keyword>
<keyword id="KW-0963">Cytoplasm</keyword>
<keyword id="KW-0456">Lyase</keyword>
<keyword id="KW-1185">Reference proteome</keyword>
<accession>A0LEB1</accession>
<dbReference type="EC" id="4.3.2.1" evidence="1"/>
<dbReference type="EMBL" id="CP000478">
    <property type="protein sequence ID" value="ABK15763.1"/>
    <property type="molecule type" value="Genomic_DNA"/>
</dbReference>
<dbReference type="RefSeq" id="WP_011696936.1">
    <property type="nucleotide sequence ID" value="NC_008554.1"/>
</dbReference>
<dbReference type="SMR" id="A0LEB1"/>
<dbReference type="FunCoup" id="A0LEB1">
    <property type="interactions" value="486"/>
</dbReference>
<dbReference type="STRING" id="335543.Sfum_0060"/>
<dbReference type="KEGG" id="sfu:Sfum_0060"/>
<dbReference type="eggNOG" id="COG0165">
    <property type="taxonomic scope" value="Bacteria"/>
</dbReference>
<dbReference type="HOGENOM" id="CLU_027272_2_3_7"/>
<dbReference type="InParanoid" id="A0LEB1"/>
<dbReference type="OrthoDB" id="9769623at2"/>
<dbReference type="UniPathway" id="UPA00068">
    <property type="reaction ID" value="UER00114"/>
</dbReference>
<dbReference type="Proteomes" id="UP000001784">
    <property type="component" value="Chromosome"/>
</dbReference>
<dbReference type="GO" id="GO:0005829">
    <property type="term" value="C:cytosol"/>
    <property type="evidence" value="ECO:0007669"/>
    <property type="project" value="TreeGrafter"/>
</dbReference>
<dbReference type="GO" id="GO:0004056">
    <property type="term" value="F:argininosuccinate lyase activity"/>
    <property type="evidence" value="ECO:0007669"/>
    <property type="project" value="UniProtKB-UniRule"/>
</dbReference>
<dbReference type="GO" id="GO:0042450">
    <property type="term" value="P:arginine biosynthetic process via ornithine"/>
    <property type="evidence" value="ECO:0007669"/>
    <property type="project" value="InterPro"/>
</dbReference>
<dbReference type="GO" id="GO:0006526">
    <property type="term" value="P:L-arginine biosynthetic process"/>
    <property type="evidence" value="ECO:0007669"/>
    <property type="project" value="UniProtKB-UniRule"/>
</dbReference>
<dbReference type="CDD" id="cd01359">
    <property type="entry name" value="Argininosuccinate_lyase"/>
    <property type="match status" value="1"/>
</dbReference>
<dbReference type="FunFam" id="1.10.275.10:FF:000002">
    <property type="entry name" value="Argininosuccinate lyase"/>
    <property type="match status" value="1"/>
</dbReference>
<dbReference type="FunFam" id="1.10.40.30:FF:000001">
    <property type="entry name" value="Argininosuccinate lyase"/>
    <property type="match status" value="1"/>
</dbReference>
<dbReference type="FunFam" id="1.20.200.10:FF:000015">
    <property type="entry name" value="argininosuccinate lyase isoform X2"/>
    <property type="match status" value="1"/>
</dbReference>
<dbReference type="Gene3D" id="1.10.40.30">
    <property type="entry name" value="Fumarase/aspartase (C-terminal domain)"/>
    <property type="match status" value="1"/>
</dbReference>
<dbReference type="Gene3D" id="1.20.200.10">
    <property type="entry name" value="Fumarase/aspartase (Central domain)"/>
    <property type="match status" value="1"/>
</dbReference>
<dbReference type="Gene3D" id="1.10.275.10">
    <property type="entry name" value="Fumarase/aspartase (N-terminal domain)"/>
    <property type="match status" value="1"/>
</dbReference>
<dbReference type="HAMAP" id="MF_00006">
    <property type="entry name" value="Arg_succ_lyase"/>
    <property type="match status" value="1"/>
</dbReference>
<dbReference type="InterPro" id="IPR029419">
    <property type="entry name" value="Arg_succ_lyase_C"/>
</dbReference>
<dbReference type="InterPro" id="IPR009049">
    <property type="entry name" value="Argininosuccinate_lyase"/>
</dbReference>
<dbReference type="InterPro" id="IPR024083">
    <property type="entry name" value="Fumarase/histidase_N"/>
</dbReference>
<dbReference type="InterPro" id="IPR020557">
    <property type="entry name" value="Fumarate_lyase_CS"/>
</dbReference>
<dbReference type="InterPro" id="IPR000362">
    <property type="entry name" value="Fumarate_lyase_fam"/>
</dbReference>
<dbReference type="InterPro" id="IPR022761">
    <property type="entry name" value="Fumarate_lyase_N"/>
</dbReference>
<dbReference type="InterPro" id="IPR008948">
    <property type="entry name" value="L-Aspartase-like"/>
</dbReference>
<dbReference type="NCBIfam" id="TIGR00838">
    <property type="entry name" value="argH"/>
    <property type="match status" value="1"/>
</dbReference>
<dbReference type="PANTHER" id="PTHR43814">
    <property type="entry name" value="ARGININOSUCCINATE LYASE"/>
    <property type="match status" value="1"/>
</dbReference>
<dbReference type="PANTHER" id="PTHR43814:SF1">
    <property type="entry name" value="ARGININOSUCCINATE LYASE"/>
    <property type="match status" value="1"/>
</dbReference>
<dbReference type="Pfam" id="PF14698">
    <property type="entry name" value="ASL_C2"/>
    <property type="match status" value="1"/>
</dbReference>
<dbReference type="Pfam" id="PF00206">
    <property type="entry name" value="Lyase_1"/>
    <property type="match status" value="1"/>
</dbReference>
<dbReference type="PRINTS" id="PR00145">
    <property type="entry name" value="ARGSUCLYASE"/>
</dbReference>
<dbReference type="PRINTS" id="PR00149">
    <property type="entry name" value="FUMRATELYASE"/>
</dbReference>
<dbReference type="SUPFAM" id="SSF48557">
    <property type="entry name" value="L-aspartase-like"/>
    <property type="match status" value="1"/>
</dbReference>
<dbReference type="PROSITE" id="PS00163">
    <property type="entry name" value="FUMARATE_LYASES"/>
    <property type="match status" value="1"/>
</dbReference>
<organism>
    <name type="scientific">Syntrophobacter fumaroxidans (strain DSM 10017 / MPOB)</name>
    <dbReference type="NCBI Taxonomy" id="335543"/>
    <lineage>
        <taxon>Bacteria</taxon>
        <taxon>Pseudomonadati</taxon>
        <taxon>Thermodesulfobacteriota</taxon>
        <taxon>Syntrophobacteria</taxon>
        <taxon>Syntrophobacterales</taxon>
        <taxon>Syntrophobacteraceae</taxon>
        <taxon>Syntrophobacter</taxon>
    </lineage>
</organism>
<reference key="1">
    <citation type="submission" date="2006-10" db="EMBL/GenBank/DDBJ databases">
        <title>Complete sequence of Syntrophobacter fumaroxidans MPOB.</title>
        <authorList>
            <consortium name="US DOE Joint Genome Institute"/>
            <person name="Copeland A."/>
            <person name="Lucas S."/>
            <person name="Lapidus A."/>
            <person name="Barry K."/>
            <person name="Detter J.C."/>
            <person name="Glavina del Rio T."/>
            <person name="Hammon N."/>
            <person name="Israni S."/>
            <person name="Pitluck S."/>
            <person name="Goltsman E.G."/>
            <person name="Martinez M."/>
            <person name="Schmutz J."/>
            <person name="Larimer F."/>
            <person name="Land M."/>
            <person name="Hauser L."/>
            <person name="Kyrpides N."/>
            <person name="Kim E."/>
            <person name="Boone D.R."/>
            <person name="Brockman F."/>
            <person name="Culley D."/>
            <person name="Ferry J."/>
            <person name="Gunsalus R."/>
            <person name="McInerney M.J."/>
            <person name="Morrison M."/>
            <person name="Plugge C."/>
            <person name="Rohlin L."/>
            <person name="Scholten J."/>
            <person name="Sieber J."/>
            <person name="Stams A.J.M."/>
            <person name="Worm P."/>
            <person name="Henstra A.M."/>
            <person name="Richardson P."/>
        </authorList>
    </citation>
    <scope>NUCLEOTIDE SEQUENCE [LARGE SCALE GENOMIC DNA]</scope>
    <source>
        <strain>DSM 10017 / MPOB</strain>
    </source>
</reference>
<feature type="chain" id="PRO_1000057056" description="Argininosuccinate lyase">
    <location>
        <begin position="1"/>
        <end position="466"/>
    </location>
</feature>
<gene>
    <name evidence="1" type="primary">argH</name>
    <name type="ordered locus">Sfum_0060</name>
</gene>
<sequence length="466" mass="52956">MTEKLWQGRFDQPTNRQVEDYTASIHFDNRLYRYDIEGSIAHCRMLAQCKIISHDDASLIVQGLGEIRRELERGKLHLGSSNEDIHMAIEQELMRKIGEVGGKLHTARSRNDQVALDVRLYMRDTLLQCRGLILQTQKVLVSCAEENLGVVMPGFTHLQHAQPILLSHHLMAYYEMLKRDDERFEQCFHRTNVLPLGSAALAGTTFPIDMEWTAKYLNFPRVTSNSIDAVSDRDYLIEFGAASAMLMMHVSRLAEELILWSSTEFDFIEISDAFCTGSSIMPQKKNPDVPELMRGKTGRVYGNLMALLTLTKALPLAYNRDLQEDKEPVFDTADTIISTLRLLSRLIPEIRFHRERMGEMAIQGFTLATDLADYLVKKGVPFRKAHHIVGQIVQYCLKNRKQLHDCTVEELKTFHKTIDQDVFPFLEVAGAIDQRVSIGGTATTRVVEAIEKARAELDALEQSLSS</sequence>
<evidence type="ECO:0000255" key="1">
    <source>
        <dbReference type="HAMAP-Rule" id="MF_00006"/>
    </source>
</evidence>
<protein>
    <recommendedName>
        <fullName evidence="1">Argininosuccinate lyase</fullName>
        <shortName evidence="1">ASAL</shortName>
        <ecNumber evidence="1">4.3.2.1</ecNumber>
    </recommendedName>
    <alternativeName>
        <fullName evidence="1">Arginosuccinase</fullName>
    </alternativeName>
</protein>
<name>ARLY_SYNFM</name>
<proteinExistence type="inferred from homology"/>